<dbReference type="EMBL" id="CY020443">
    <property type="protein sequence ID" value="ABO38349.1"/>
    <property type="molecule type" value="Viral_cRNA"/>
</dbReference>
<dbReference type="Proteomes" id="UP000008582">
    <property type="component" value="Genome"/>
</dbReference>
<dbReference type="GO" id="GO:0044164">
    <property type="term" value="C:host cell cytosol"/>
    <property type="evidence" value="ECO:0007669"/>
    <property type="project" value="UniProtKB-SubCell"/>
</dbReference>
<dbReference type="GO" id="GO:0042025">
    <property type="term" value="C:host cell nucleus"/>
    <property type="evidence" value="ECO:0007669"/>
    <property type="project" value="UniProtKB-SubCell"/>
</dbReference>
<dbReference type="GO" id="GO:0016020">
    <property type="term" value="C:membrane"/>
    <property type="evidence" value="ECO:0007669"/>
    <property type="project" value="UniProtKB-UniRule"/>
</dbReference>
<dbReference type="GO" id="GO:0039545">
    <property type="term" value="P:symbiont-mediated suppression of host cytoplasmic pattern recognition receptor signaling pathway via inhibition of MAVS activity"/>
    <property type="evidence" value="ECO:0000250"/>
    <property type="project" value="UniProtKB"/>
</dbReference>
<dbReference type="HAMAP" id="MF_04064">
    <property type="entry name" value="INFV_PB1F2"/>
    <property type="match status" value="1"/>
</dbReference>
<dbReference type="InterPro" id="IPR021045">
    <property type="entry name" value="Flu_proapoptotic_PB1-F2"/>
</dbReference>
<dbReference type="Pfam" id="PF11986">
    <property type="entry name" value="PB1-F2"/>
    <property type="match status" value="1"/>
</dbReference>
<comment type="function">
    <text evidence="1">May play an important role in promoting lung pathology in both primary viral infection and secondary bacterial infection.</text>
</comment>
<comment type="subcellular location">
    <subcellularLocation>
        <location evidence="1">Host nucleus</location>
    </subcellularLocation>
    <subcellularLocation>
        <location evidence="1">Host cytoplasm</location>
        <location evidence="1">Host cytosol</location>
    </subcellularLocation>
</comment>
<comment type="miscellaneous">
    <text>Is not encoded in all strains, and seems to be dispensable for replication.</text>
</comment>
<comment type="similarity">
    <text evidence="1">Belongs to the influenza viruses PB1-F2 family.</text>
</comment>
<feature type="chain" id="PRO_0000373024" description="Protein PB1-F2">
    <location>
        <begin position="1"/>
        <end position="57"/>
    </location>
</feature>
<feature type="region of interest" description="Disordered" evidence="2">
    <location>
        <begin position="1"/>
        <end position="35"/>
    </location>
</feature>
<feature type="compositionally biased region" description="Polar residues" evidence="2">
    <location>
        <begin position="1"/>
        <end position="19"/>
    </location>
</feature>
<feature type="compositionally biased region" description="Basic and acidic residues" evidence="2">
    <location>
        <begin position="20"/>
        <end position="34"/>
    </location>
</feature>
<proteinExistence type="inferred from homology"/>
<sequence>MGQEQGTPWIQSTGHISTQKGEDGQKTPKLEHRNSTQLMGHYQKTMNQVVMPKQIVY</sequence>
<organismHost>
    <name type="scientific">Aves</name>
    <dbReference type="NCBI Taxonomy" id="8782"/>
</organismHost>
<organismHost>
    <name type="scientific">Homo sapiens</name>
    <name type="common">Human</name>
    <dbReference type="NCBI Taxonomy" id="9606"/>
</organismHost>
<organismHost>
    <name type="scientific">Sus scrofa</name>
    <name type="common">Pig</name>
    <dbReference type="NCBI Taxonomy" id="9823"/>
</organismHost>
<keyword id="KW-1035">Host cytoplasm</keyword>
<keyword id="KW-1048">Host nucleus</keyword>
<evidence type="ECO:0000255" key="1">
    <source>
        <dbReference type="HAMAP-Rule" id="MF_04064"/>
    </source>
</evidence>
<evidence type="ECO:0000256" key="2">
    <source>
        <dbReference type="SAM" id="MobiDB-lite"/>
    </source>
</evidence>
<reference key="1">
    <citation type="submission" date="2007-03" db="EMBL/GenBank/DDBJ databases">
        <title>The NIAID influenza genome sequencing project.</title>
        <authorList>
            <person name="Ghedin E."/>
            <person name="Spiro D."/>
            <person name="Miller N."/>
            <person name="Zaborsky J."/>
            <person name="Feldblyum T."/>
            <person name="Subbu V."/>
            <person name="Shumway M."/>
            <person name="Sparenborg J."/>
            <person name="Groveman L."/>
            <person name="Halpin R."/>
            <person name="Sitz J."/>
            <person name="Koo H."/>
            <person name="Salzberg S.L."/>
            <person name="Webster R.G."/>
            <person name="Hoffmann E."/>
            <person name="Krauss S."/>
            <person name="Naeve C."/>
            <person name="Bao Y."/>
            <person name="Bolotov P."/>
            <person name="Dernovoy D."/>
            <person name="Kiryutin B."/>
            <person name="Lipman D.J."/>
            <person name="Tatusova T."/>
        </authorList>
    </citation>
    <scope>NUCLEOTIDE SEQUENCE [GENOMIC RNA]</scope>
</reference>
<reference key="2">
    <citation type="submission" date="2007-03" db="EMBL/GenBank/DDBJ databases">
        <authorList>
            <consortium name="The NIAID Influenza Genome Sequencing Consortium"/>
        </authorList>
    </citation>
    <scope>NUCLEOTIDE SEQUENCE [GENOMIC RNA]</scope>
</reference>
<accession>A4GCI4</accession>
<name>PB1F2_I83A1</name>
<gene>
    <name evidence="1" type="primary">PB1</name>
    <name type="synonym">PB1-F2</name>
</gene>
<organism>
    <name type="scientific">Influenza A virus (strain A/Chile/1/1983 H1N1)</name>
    <dbReference type="NCBI Taxonomy" id="380985"/>
    <lineage>
        <taxon>Viruses</taxon>
        <taxon>Riboviria</taxon>
        <taxon>Orthornavirae</taxon>
        <taxon>Negarnaviricota</taxon>
        <taxon>Polyploviricotina</taxon>
        <taxon>Insthoviricetes</taxon>
        <taxon>Articulavirales</taxon>
        <taxon>Orthomyxoviridae</taxon>
        <taxon>Alphainfluenzavirus</taxon>
        <taxon>Alphainfluenzavirus influenzae</taxon>
        <taxon>Influenza A virus</taxon>
    </lineage>
</organism>
<protein>
    <recommendedName>
        <fullName evidence="1">Protein PB1-F2</fullName>
    </recommendedName>
</protein>